<keyword id="KW-0028">Amino-acid biosynthesis</keyword>
<keyword id="KW-0067">ATP-binding</keyword>
<keyword id="KW-0963">Cytoplasm</keyword>
<keyword id="KW-0418">Kinase</keyword>
<keyword id="KW-0547">Nucleotide-binding</keyword>
<keyword id="KW-0641">Proline biosynthesis</keyword>
<keyword id="KW-0808">Transferase</keyword>
<reference key="1">
    <citation type="submission" date="2007-12" db="EMBL/GenBank/DDBJ databases">
        <title>Brucella suis ATCC 23445 whole genome shotgun sequencing project.</title>
        <authorList>
            <person name="Setubal J.C."/>
            <person name="Bowns C."/>
            <person name="Boyle S."/>
            <person name="Crasta O.R."/>
            <person name="Czar M.J."/>
            <person name="Dharmanolla C."/>
            <person name="Gillespie J.J."/>
            <person name="Kenyon R.W."/>
            <person name="Lu J."/>
            <person name="Mane S."/>
            <person name="Mohapatra S."/>
            <person name="Nagrani S."/>
            <person name="Purkayastha A."/>
            <person name="Rajasimha H.K."/>
            <person name="Shallom J.M."/>
            <person name="Shallom S."/>
            <person name="Shukla M."/>
            <person name="Snyder E.E."/>
            <person name="Sobral B.W."/>
            <person name="Wattam A.R."/>
            <person name="Will R."/>
            <person name="Williams K."/>
            <person name="Yoo H."/>
            <person name="Bruce D."/>
            <person name="Detter C."/>
            <person name="Munk C."/>
            <person name="Brettin T.S."/>
        </authorList>
    </citation>
    <scope>NUCLEOTIDE SEQUENCE [LARGE SCALE GENOMIC DNA]</scope>
    <source>
        <strain>ATCC 23445 / NCTC 10510</strain>
    </source>
</reference>
<accession>A9WWW8</accession>
<name>PROB_BRUSI</name>
<feature type="chain" id="PRO_1000081040" description="Glutamate 5-kinase">
    <location>
        <begin position="1"/>
        <end position="378"/>
    </location>
</feature>
<feature type="domain" description="PUA" evidence="1">
    <location>
        <begin position="279"/>
        <end position="356"/>
    </location>
</feature>
<feature type="binding site" evidence="1">
    <location>
        <position position="14"/>
    </location>
    <ligand>
        <name>ATP</name>
        <dbReference type="ChEBI" id="CHEBI:30616"/>
    </ligand>
</feature>
<feature type="binding site" evidence="1">
    <location>
        <position position="54"/>
    </location>
    <ligand>
        <name>substrate</name>
    </ligand>
</feature>
<feature type="binding site" evidence="1">
    <location>
        <position position="141"/>
    </location>
    <ligand>
        <name>substrate</name>
    </ligand>
</feature>
<feature type="binding site" evidence="1">
    <location>
        <position position="153"/>
    </location>
    <ligand>
        <name>substrate</name>
    </ligand>
</feature>
<feature type="binding site" evidence="1">
    <location>
        <begin position="173"/>
        <end position="174"/>
    </location>
    <ligand>
        <name>ATP</name>
        <dbReference type="ChEBI" id="CHEBI:30616"/>
    </ligand>
</feature>
<gene>
    <name evidence="1" type="primary">proB</name>
    <name type="ordered locus">BSUIS_B1322</name>
</gene>
<protein>
    <recommendedName>
        <fullName evidence="1">Glutamate 5-kinase</fullName>
        <ecNumber evidence="1">2.7.2.11</ecNumber>
    </recommendedName>
    <alternativeName>
        <fullName evidence="1">Gamma-glutamyl kinase</fullName>
        <shortName evidence="1">GK</shortName>
    </alternativeName>
</protein>
<organism>
    <name type="scientific">Brucella suis (strain ATCC 23445 / NCTC 10510)</name>
    <dbReference type="NCBI Taxonomy" id="470137"/>
    <lineage>
        <taxon>Bacteria</taxon>
        <taxon>Pseudomonadati</taxon>
        <taxon>Pseudomonadota</taxon>
        <taxon>Alphaproteobacteria</taxon>
        <taxon>Hyphomicrobiales</taxon>
        <taxon>Brucellaceae</taxon>
        <taxon>Brucella/Ochrobactrum group</taxon>
        <taxon>Brucella</taxon>
    </lineage>
</organism>
<evidence type="ECO:0000255" key="1">
    <source>
        <dbReference type="HAMAP-Rule" id="MF_00456"/>
    </source>
</evidence>
<dbReference type="EC" id="2.7.2.11" evidence="1"/>
<dbReference type="EMBL" id="CP000912">
    <property type="protein sequence ID" value="ABY40254.1"/>
    <property type="molecule type" value="Genomic_DNA"/>
</dbReference>
<dbReference type="RefSeq" id="WP_004684325.1">
    <property type="nucleotide sequence ID" value="NC_010167.1"/>
</dbReference>
<dbReference type="SMR" id="A9WWW8"/>
<dbReference type="GeneID" id="97533036"/>
<dbReference type="KEGG" id="bmt:BSUIS_B1322"/>
<dbReference type="HOGENOM" id="CLU_025400_2_0_5"/>
<dbReference type="UniPathway" id="UPA00098">
    <property type="reaction ID" value="UER00359"/>
</dbReference>
<dbReference type="Proteomes" id="UP000008545">
    <property type="component" value="Chromosome II"/>
</dbReference>
<dbReference type="GO" id="GO:0005829">
    <property type="term" value="C:cytosol"/>
    <property type="evidence" value="ECO:0007669"/>
    <property type="project" value="TreeGrafter"/>
</dbReference>
<dbReference type="GO" id="GO:0005524">
    <property type="term" value="F:ATP binding"/>
    <property type="evidence" value="ECO:0007669"/>
    <property type="project" value="UniProtKB-KW"/>
</dbReference>
<dbReference type="GO" id="GO:0004349">
    <property type="term" value="F:glutamate 5-kinase activity"/>
    <property type="evidence" value="ECO:0007669"/>
    <property type="project" value="UniProtKB-UniRule"/>
</dbReference>
<dbReference type="GO" id="GO:0003723">
    <property type="term" value="F:RNA binding"/>
    <property type="evidence" value="ECO:0007669"/>
    <property type="project" value="InterPro"/>
</dbReference>
<dbReference type="GO" id="GO:0055129">
    <property type="term" value="P:L-proline biosynthetic process"/>
    <property type="evidence" value="ECO:0007669"/>
    <property type="project" value="UniProtKB-UniRule"/>
</dbReference>
<dbReference type="CDD" id="cd04242">
    <property type="entry name" value="AAK_G5K_ProB"/>
    <property type="match status" value="1"/>
</dbReference>
<dbReference type="CDD" id="cd21157">
    <property type="entry name" value="PUA_G5K"/>
    <property type="match status" value="1"/>
</dbReference>
<dbReference type="FunFam" id="2.30.130.10:FF:000007">
    <property type="entry name" value="Glutamate 5-kinase"/>
    <property type="match status" value="1"/>
</dbReference>
<dbReference type="FunFam" id="3.40.1160.10:FF:000018">
    <property type="entry name" value="Glutamate 5-kinase"/>
    <property type="match status" value="1"/>
</dbReference>
<dbReference type="Gene3D" id="3.40.1160.10">
    <property type="entry name" value="Acetylglutamate kinase-like"/>
    <property type="match status" value="1"/>
</dbReference>
<dbReference type="Gene3D" id="2.30.130.10">
    <property type="entry name" value="PUA domain"/>
    <property type="match status" value="1"/>
</dbReference>
<dbReference type="HAMAP" id="MF_00456">
    <property type="entry name" value="ProB"/>
    <property type="match status" value="1"/>
</dbReference>
<dbReference type="InterPro" id="IPR036393">
    <property type="entry name" value="AceGlu_kinase-like_sf"/>
</dbReference>
<dbReference type="InterPro" id="IPR001048">
    <property type="entry name" value="Asp/Glu/Uridylate_kinase"/>
</dbReference>
<dbReference type="InterPro" id="IPR041739">
    <property type="entry name" value="G5K_ProB"/>
</dbReference>
<dbReference type="InterPro" id="IPR001057">
    <property type="entry name" value="Glu/AcGlu_kinase"/>
</dbReference>
<dbReference type="InterPro" id="IPR011529">
    <property type="entry name" value="Glu_5kinase"/>
</dbReference>
<dbReference type="InterPro" id="IPR005715">
    <property type="entry name" value="Glu_5kinase/COase_Synthase"/>
</dbReference>
<dbReference type="InterPro" id="IPR019797">
    <property type="entry name" value="Glutamate_5-kinase_CS"/>
</dbReference>
<dbReference type="InterPro" id="IPR002478">
    <property type="entry name" value="PUA"/>
</dbReference>
<dbReference type="InterPro" id="IPR015947">
    <property type="entry name" value="PUA-like_sf"/>
</dbReference>
<dbReference type="InterPro" id="IPR036974">
    <property type="entry name" value="PUA_sf"/>
</dbReference>
<dbReference type="NCBIfam" id="TIGR01027">
    <property type="entry name" value="proB"/>
    <property type="match status" value="1"/>
</dbReference>
<dbReference type="PANTHER" id="PTHR43654">
    <property type="entry name" value="GLUTAMATE 5-KINASE"/>
    <property type="match status" value="1"/>
</dbReference>
<dbReference type="PANTHER" id="PTHR43654:SF1">
    <property type="entry name" value="ISOPENTENYL PHOSPHATE KINASE"/>
    <property type="match status" value="1"/>
</dbReference>
<dbReference type="Pfam" id="PF00696">
    <property type="entry name" value="AA_kinase"/>
    <property type="match status" value="1"/>
</dbReference>
<dbReference type="Pfam" id="PF01472">
    <property type="entry name" value="PUA"/>
    <property type="match status" value="1"/>
</dbReference>
<dbReference type="PIRSF" id="PIRSF000729">
    <property type="entry name" value="GK"/>
    <property type="match status" value="1"/>
</dbReference>
<dbReference type="PRINTS" id="PR00474">
    <property type="entry name" value="GLU5KINASE"/>
</dbReference>
<dbReference type="SMART" id="SM00359">
    <property type="entry name" value="PUA"/>
    <property type="match status" value="1"/>
</dbReference>
<dbReference type="SUPFAM" id="SSF53633">
    <property type="entry name" value="Carbamate kinase-like"/>
    <property type="match status" value="1"/>
</dbReference>
<dbReference type="SUPFAM" id="SSF88697">
    <property type="entry name" value="PUA domain-like"/>
    <property type="match status" value="1"/>
</dbReference>
<dbReference type="PROSITE" id="PS00902">
    <property type="entry name" value="GLUTAMATE_5_KINASE"/>
    <property type="match status" value="1"/>
</dbReference>
<dbReference type="PROSITE" id="PS50890">
    <property type="entry name" value="PUA"/>
    <property type="match status" value="1"/>
</dbReference>
<sequence>MLKKLKDYRRIVVKIGSALLVDRATGLKREWLESLGQDIAALQHAGVEVLVVSSGAIALGRTVLGLPKKALKLEESQAAAAAGQIALAKAYADVLGGHGIKSGQILVTLSDTEERRRYLNARATIETLLKLKAVPIINENDTVATTEIRYGDNDRLAARVATMMGADLLILLSDIDGLYTAPPHKNPDAQFLPFVETITPQIEAMAGAAASELSRGGMKTKLDAGKIANAAGTAMIITSGTRFGPLSAIDRGERATLFEAAHAPVNAWKTWISGNLEPAGRLTVDAGAVKALKSGKSLLPAGVKEVDGDFERGDTVAVMNEDGREIARGLIAYDAADARKVAGHKSDEISAILGYDARAAMIHRNDLVVRAASDAKAA</sequence>
<comment type="function">
    <text evidence="1">Catalyzes the transfer of a phosphate group to glutamate to form L-glutamate 5-phosphate.</text>
</comment>
<comment type="catalytic activity">
    <reaction evidence="1">
        <text>L-glutamate + ATP = L-glutamyl 5-phosphate + ADP</text>
        <dbReference type="Rhea" id="RHEA:14877"/>
        <dbReference type="ChEBI" id="CHEBI:29985"/>
        <dbReference type="ChEBI" id="CHEBI:30616"/>
        <dbReference type="ChEBI" id="CHEBI:58274"/>
        <dbReference type="ChEBI" id="CHEBI:456216"/>
        <dbReference type="EC" id="2.7.2.11"/>
    </reaction>
</comment>
<comment type="pathway">
    <text evidence="1">Amino-acid biosynthesis; L-proline biosynthesis; L-glutamate 5-semialdehyde from L-glutamate: step 1/2.</text>
</comment>
<comment type="subcellular location">
    <subcellularLocation>
        <location evidence="1">Cytoplasm</location>
    </subcellularLocation>
</comment>
<comment type="similarity">
    <text evidence="1">Belongs to the glutamate 5-kinase family.</text>
</comment>
<proteinExistence type="inferred from homology"/>